<name>OLM2B_BOVIN</name>
<accession>A6QLD2</accession>
<organism>
    <name type="scientific">Bos taurus</name>
    <name type="common">Bovine</name>
    <dbReference type="NCBI Taxonomy" id="9913"/>
    <lineage>
        <taxon>Eukaryota</taxon>
        <taxon>Metazoa</taxon>
        <taxon>Chordata</taxon>
        <taxon>Craniata</taxon>
        <taxon>Vertebrata</taxon>
        <taxon>Euteleostomi</taxon>
        <taxon>Mammalia</taxon>
        <taxon>Eutheria</taxon>
        <taxon>Laurasiatheria</taxon>
        <taxon>Artiodactyla</taxon>
        <taxon>Ruminantia</taxon>
        <taxon>Pecora</taxon>
        <taxon>Bovidae</taxon>
        <taxon>Bovinae</taxon>
        <taxon>Bos</taxon>
    </lineage>
</organism>
<keyword id="KW-0175">Coiled coil</keyword>
<keyword id="KW-1015">Disulfide bond</keyword>
<keyword id="KW-0325">Glycoprotein</keyword>
<keyword id="KW-1185">Reference proteome</keyword>
<keyword id="KW-0964">Secreted</keyword>
<keyword id="KW-0732">Signal</keyword>
<gene>
    <name type="primary">OLFML2B</name>
</gene>
<sequence>MAKSLLLVLCFALVTTLGWGYSAPPTGTTEPPDVQTVAPTEDETLQNEADNQENVLSQLLGDYDKVKAVSEGSDCQCKCVVRPLGRDACQRVNAGTSRKEDFYTVETITSGPSCKCACVAPPSALNPCEGDFRLQKLREADSRDLKLSTIIDMLEGAFYGLDLLKLHSVTTKLVGRVDKLEEEISKNLTKENEQIREDVEEIRTEMNKRGKENCSNNILDSIPDIRSALQRDAAAAYTHPEYEERFLQEETVSQQIKSIKLLQTRPLAPPEVVKPQRPLQRQVHLRGRPASRPTVIRGITYYKAKDPEEENDIEEHQDEFFSGEHGMDLLIEDQLLRHNQLLTSATRRPAATGRSAAVTADAGTTSAGTPTTALPSARLPASTAAPSTPDPAVSASVEQFSTPLPTTSVSPDPTEEAVPTPFTQVPATTVAHTATQQPPASAPPSAAPEDAFVEATHTAPVPPPPVRTDSPGKDSTARQGTVPPGPTLSPEEEDDIRNVIGRCKDTLSTITGPITQNTYGRNEGAWMKDPLAKDERIYVTNYYYGNTLVEFRNLENFKQGRWSNSYKLPYSWIGTGHVVYNGAFYYNRAFTRNIIKYDLKQRYVAAWAMLHDVAYEEATPWRWQGHSDVDFAVDENGLWLIYPALDDEGFSQEVIVLSKLNAVDLSTQKETTWRTGLRRNLYGNCFVICGVLYAVDSHNQRNANISYAFDTHTNTQIVPRLLFENEYSYTTQIDYNPKDRLLYAWDNGHQVTYHVIFAY</sequence>
<evidence type="ECO:0000250" key="1"/>
<evidence type="ECO:0000255" key="2"/>
<evidence type="ECO:0000255" key="3">
    <source>
        <dbReference type="PROSITE-ProRule" id="PRU00446"/>
    </source>
</evidence>
<evidence type="ECO:0000256" key="4">
    <source>
        <dbReference type="SAM" id="MobiDB-lite"/>
    </source>
</evidence>
<dbReference type="EMBL" id="BC147922">
    <property type="protein sequence ID" value="AAI47923.1"/>
    <property type="molecule type" value="mRNA"/>
</dbReference>
<dbReference type="RefSeq" id="NP_001093824.1">
    <property type="nucleotide sequence ID" value="NM_001100354.1"/>
</dbReference>
<dbReference type="SMR" id="A6QLD2"/>
<dbReference type="FunCoup" id="A6QLD2">
    <property type="interactions" value="146"/>
</dbReference>
<dbReference type="STRING" id="9913.ENSBTAP00000015933"/>
<dbReference type="GlyCosmos" id="A6QLD2">
    <property type="glycosylation" value="3 sites, No reported glycans"/>
</dbReference>
<dbReference type="GlyGen" id="A6QLD2">
    <property type="glycosylation" value="3 sites"/>
</dbReference>
<dbReference type="PaxDb" id="9913-ENSBTAP00000015933"/>
<dbReference type="GeneID" id="513053"/>
<dbReference type="KEGG" id="bta:513053"/>
<dbReference type="CTD" id="25903"/>
<dbReference type="VEuPathDB" id="HostDB:ENSBTAG00000034147"/>
<dbReference type="eggNOG" id="KOG3545">
    <property type="taxonomic scope" value="Eukaryota"/>
</dbReference>
<dbReference type="HOGENOM" id="CLU_024107_0_0_1"/>
<dbReference type="InParanoid" id="A6QLD2"/>
<dbReference type="OMA" id="GHCFVIC"/>
<dbReference type="OrthoDB" id="8626508at2759"/>
<dbReference type="TreeFam" id="TF351220"/>
<dbReference type="Proteomes" id="UP000009136">
    <property type="component" value="Chromosome 3"/>
</dbReference>
<dbReference type="Bgee" id="ENSBTAG00000034147">
    <property type="expression patterns" value="Expressed in trachea and 101 other cell types or tissues"/>
</dbReference>
<dbReference type="GO" id="GO:0005615">
    <property type="term" value="C:extracellular space"/>
    <property type="evidence" value="ECO:0000318"/>
    <property type="project" value="GO_Central"/>
</dbReference>
<dbReference type="GO" id="GO:0007165">
    <property type="term" value="P:signal transduction"/>
    <property type="evidence" value="ECO:0000318"/>
    <property type="project" value="GO_Central"/>
</dbReference>
<dbReference type="InterPro" id="IPR003112">
    <property type="entry name" value="Olfac-like_dom"/>
</dbReference>
<dbReference type="InterPro" id="IPR050605">
    <property type="entry name" value="Olfactomedin-like_domain"/>
</dbReference>
<dbReference type="PANTHER" id="PTHR23192:SF37">
    <property type="entry name" value="OLFACTOMEDIN-LIKE PROTEIN 2B"/>
    <property type="match status" value="1"/>
</dbReference>
<dbReference type="PANTHER" id="PTHR23192">
    <property type="entry name" value="OLFACTOMEDIN-RELATED"/>
    <property type="match status" value="1"/>
</dbReference>
<dbReference type="Pfam" id="PF02191">
    <property type="entry name" value="OLF"/>
    <property type="match status" value="1"/>
</dbReference>
<dbReference type="SMART" id="SM00284">
    <property type="entry name" value="OLF"/>
    <property type="match status" value="1"/>
</dbReference>
<dbReference type="PROSITE" id="PS51132">
    <property type="entry name" value="OLF"/>
    <property type="match status" value="1"/>
</dbReference>
<comment type="subunit">
    <text evidence="1">Homodimer. Binds to heparin and chondroitin sulfate E (By similarity).</text>
</comment>
<comment type="subcellular location">
    <subcellularLocation>
        <location evidence="1">Secreted</location>
    </subcellularLocation>
</comment>
<comment type="PTM">
    <text evidence="1">O-glycosylated and N-glycosylated.</text>
</comment>
<feature type="signal peptide" evidence="1">
    <location>
        <begin position="1"/>
        <end position="20"/>
    </location>
</feature>
<feature type="chain" id="PRO_0000311425" description="Olfactomedin-like protein 2B">
    <location>
        <begin position="21"/>
        <end position="759"/>
    </location>
</feature>
<feature type="domain" description="Olfactomedin-like" evidence="3">
    <location>
        <begin position="502"/>
        <end position="759"/>
    </location>
</feature>
<feature type="region of interest" description="Disordered" evidence="4">
    <location>
        <begin position="346"/>
        <end position="396"/>
    </location>
</feature>
<feature type="region of interest" description="Disordered" evidence="4">
    <location>
        <begin position="456"/>
        <end position="494"/>
    </location>
</feature>
<feature type="coiled-coil region" evidence="2">
    <location>
        <begin position="40"/>
        <end position="68"/>
    </location>
</feature>
<feature type="coiled-coil region" evidence="2">
    <location>
        <begin position="179"/>
        <end position="209"/>
    </location>
</feature>
<feature type="compositionally biased region" description="Low complexity" evidence="4">
    <location>
        <begin position="356"/>
        <end position="396"/>
    </location>
</feature>
<feature type="glycosylation site" description="N-linked (GlcNAc...) asparagine" evidence="2">
    <location>
        <position position="187"/>
    </location>
</feature>
<feature type="glycosylation site" description="N-linked (GlcNAc...) asparagine" evidence="2">
    <location>
        <position position="213"/>
    </location>
</feature>
<feature type="glycosylation site" description="N-linked (GlcNAc...) asparagine" evidence="2">
    <location>
        <position position="704"/>
    </location>
</feature>
<feature type="disulfide bond" evidence="3">
    <location>
        <begin position="503"/>
        <end position="689"/>
    </location>
</feature>
<proteinExistence type="evidence at transcript level"/>
<protein>
    <recommendedName>
        <fullName>Olfactomedin-like protein 2B</fullName>
    </recommendedName>
</protein>
<reference key="1">
    <citation type="submission" date="2007-06" db="EMBL/GenBank/DDBJ databases">
        <authorList>
            <consortium name="NIH - Mammalian Gene Collection (MGC) project"/>
        </authorList>
    </citation>
    <scope>NUCLEOTIDE SEQUENCE [LARGE SCALE MRNA]</scope>
    <source>
        <strain>Hereford</strain>
        <tissue>Fetal muscle</tissue>
    </source>
</reference>